<reference key="1">
    <citation type="journal article" date="1997" name="Nature">
        <title>The complete genome sequence of the Gram-positive bacterium Bacillus subtilis.</title>
        <authorList>
            <person name="Kunst F."/>
            <person name="Ogasawara N."/>
            <person name="Moszer I."/>
            <person name="Albertini A.M."/>
            <person name="Alloni G."/>
            <person name="Azevedo V."/>
            <person name="Bertero M.G."/>
            <person name="Bessieres P."/>
            <person name="Bolotin A."/>
            <person name="Borchert S."/>
            <person name="Borriss R."/>
            <person name="Boursier L."/>
            <person name="Brans A."/>
            <person name="Braun M."/>
            <person name="Brignell S.C."/>
            <person name="Bron S."/>
            <person name="Brouillet S."/>
            <person name="Bruschi C.V."/>
            <person name="Caldwell B."/>
            <person name="Capuano V."/>
            <person name="Carter N.M."/>
            <person name="Choi S.-K."/>
            <person name="Codani J.-J."/>
            <person name="Connerton I.F."/>
            <person name="Cummings N.J."/>
            <person name="Daniel R.A."/>
            <person name="Denizot F."/>
            <person name="Devine K.M."/>
            <person name="Duesterhoeft A."/>
            <person name="Ehrlich S.D."/>
            <person name="Emmerson P.T."/>
            <person name="Entian K.-D."/>
            <person name="Errington J."/>
            <person name="Fabret C."/>
            <person name="Ferrari E."/>
            <person name="Foulger D."/>
            <person name="Fritz C."/>
            <person name="Fujita M."/>
            <person name="Fujita Y."/>
            <person name="Fuma S."/>
            <person name="Galizzi A."/>
            <person name="Galleron N."/>
            <person name="Ghim S.-Y."/>
            <person name="Glaser P."/>
            <person name="Goffeau A."/>
            <person name="Golightly E.J."/>
            <person name="Grandi G."/>
            <person name="Guiseppi G."/>
            <person name="Guy B.J."/>
            <person name="Haga K."/>
            <person name="Haiech J."/>
            <person name="Harwood C.R."/>
            <person name="Henaut A."/>
            <person name="Hilbert H."/>
            <person name="Holsappel S."/>
            <person name="Hosono S."/>
            <person name="Hullo M.-F."/>
            <person name="Itaya M."/>
            <person name="Jones L.-M."/>
            <person name="Joris B."/>
            <person name="Karamata D."/>
            <person name="Kasahara Y."/>
            <person name="Klaerr-Blanchard M."/>
            <person name="Klein C."/>
            <person name="Kobayashi Y."/>
            <person name="Koetter P."/>
            <person name="Koningstein G."/>
            <person name="Krogh S."/>
            <person name="Kumano M."/>
            <person name="Kurita K."/>
            <person name="Lapidus A."/>
            <person name="Lardinois S."/>
            <person name="Lauber J."/>
            <person name="Lazarevic V."/>
            <person name="Lee S.-M."/>
            <person name="Levine A."/>
            <person name="Liu H."/>
            <person name="Masuda S."/>
            <person name="Mauel C."/>
            <person name="Medigue C."/>
            <person name="Medina N."/>
            <person name="Mellado R.P."/>
            <person name="Mizuno M."/>
            <person name="Moestl D."/>
            <person name="Nakai S."/>
            <person name="Noback M."/>
            <person name="Noone D."/>
            <person name="O'Reilly M."/>
            <person name="Ogawa K."/>
            <person name="Ogiwara A."/>
            <person name="Oudega B."/>
            <person name="Park S.-H."/>
            <person name="Parro V."/>
            <person name="Pohl T.M."/>
            <person name="Portetelle D."/>
            <person name="Porwollik S."/>
            <person name="Prescott A.M."/>
            <person name="Presecan E."/>
            <person name="Pujic P."/>
            <person name="Purnelle B."/>
            <person name="Rapoport G."/>
            <person name="Rey M."/>
            <person name="Reynolds S."/>
            <person name="Rieger M."/>
            <person name="Rivolta C."/>
            <person name="Rocha E."/>
            <person name="Roche B."/>
            <person name="Rose M."/>
            <person name="Sadaie Y."/>
            <person name="Sato T."/>
            <person name="Scanlan E."/>
            <person name="Schleich S."/>
            <person name="Schroeter R."/>
            <person name="Scoffone F."/>
            <person name="Sekiguchi J."/>
            <person name="Sekowska A."/>
            <person name="Seror S.J."/>
            <person name="Serror P."/>
            <person name="Shin B.-S."/>
            <person name="Soldo B."/>
            <person name="Sorokin A."/>
            <person name="Tacconi E."/>
            <person name="Takagi T."/>
            <person name="Takahashi H."/>
            <person name="Takemaru K."/>
            <person name="Takeuchi M."/>
            <person name="Tamakoshi A."/>
            <person name="Tanaka T."/>
            <person name="Terpstra P."/>
            <person name="Tognoni A."/>
            <person name="Tosato V."/>
            <person name="Uchiyama S."/>
            <person name="Vandenbol M."/>
            <person name="Vannier F."/>
            <person name="Vassarotti A."/>
            <person name="Viari A."/>
            <person name="Wambutt R."/>
            <person name="Wedler E."/>
            <person name="Wedler H."/>
            <person name="Weitzenegger T."/>
            <person name="Winters P."/>
            <person name="Wipat A."/>
            <person name="Yamamoto H."/>
            <person name="Yamane K."/>
            <person name="Yasumoto K."/>
            <person name="Yata K."/>
            <person name="Yoshida K."/>
            <person name="Yoshikawa H.-F."/>
            <person name="Zumstein E."/>
            <person name="Yoshikawa H."/>
            <person name="Danchin A."/>
        </authorList>
    </citation>
    <scope>NUCLEOTIDE SEQUENCE [LARGE SCALE GENOMIC DNA]</scope>
    <source>
        <strain>168</strain>
    </source>
</reference>
<accession>O32170</accession>
<keyword id="KW-1185">Reference proteome</keyword>
<proteinExistence type="predicted"/>
<gene>
    <name type="primary">yusD</name>
    <name type="ordered locus">BSU32760</name>
</gene>
<protein>
    <recommendedName>
        <fullName>SCP2 domain-containing protein YusD</fullName>
    </recommendedName>
</protein>
<dbReference type="EMBL" id="AL009126">
    <property type="protein sequence ID" value="CAB15265.1"/>
    <property type="molecule type" value="Genomic_DNA"/>
</dbReference>
<dbReference type="PIR" id="E70020">
    <property type="entry name" value="E70020"/>
</dbReference>
<dbReference type="RefSeq" id="NP_391155.1">
    <property type="nucleotide sequence ID" value="NC_000964.3"/>
</dbReference>
<dbReference type="RefSeq" id="WP_003228587.1">
    <property type="nucleotide sequence ID" value="NZ_OZ025638.1"/>
</dbReference>
<dbReference type="SMR" id="O32170"/>
<dbReference type="FunCoup" id="O32170">
    <property type="interactions" value="2"/>
</dbReference>
<dbReference type="STRING" id="224308.BSU32760"/>
<dbReference type="PaxDb" id="224308-BSU32760"/>
<dbReference type="EnsemblBacteria" id="CAB15265">
    <property type="protein sequence ID" value="CAB15265"/>
    <property type="gene ID" value="BSU_32760"/>
</dbReference>
<dbReference type="GeneID" id="936713"/>
<dbReference type="KEGG" id="bsu:BSU32760"/>
<dbReference type="PATRIC" id="fig|224308.179.peg.3550"/>
<dbReference type="eggNOG" id="ENOG50330P4">
    <property type="taxonomic scope" value="Bacteria"/>
</dbReference>
<dbReference type="InParanoid" id="O32170"/>
<dbReference type="OrthoDB" id="2879326at2"/>
<dbReference type="BioCyc" id="BSUB:BSU32760-MONOMER"/>
<dbReference type="Proteomes" id="UP000001570">
    <property type="component" value="Chromosome"/>
</dbReference>
<dbReference type="Gene3D" id="3.30.1050.10">
    <property type="entry name" value="SCP2 sterol-binding domain"/>
    <property type="match status" value="1"/>
</dbReference>
<dbReference type="InterPro" id="IPR003033">
    <property type="entry name" value="SCP2_sterol-bd_dom"/>
</dbReference>
<dbReference type="InterPro" id="IPR036527">
    <property type="entry name" value="SCP2_sterol-bd_dom_sf"/>
</dbReference>
<dbReference type="Pfam" id="PF02036">
    <property type="entry name" value="SCP2"/>
    <property type="match status" value="1"/>
</dbReference>
<dbReference type="SUPFAM" id="SSF55718">
    <property type="entry name" value="SCP-like"/>
    <property type="match status" value="1"/>
</dbReference>
<sequence length="114" mass="12858">MEKAEVLEDEYQHLFLKPLLNASTLLITFQGEAEALTVSINEQGEMKKVSPPQTSNLTFYGNQTEIIDLLHGDISLQHLIQSGSLKVKGSFRALLKLEAILWLTNGFFQRILKN</sequence>
<feature type="chain" id="PRO_0000049923" description="SCP2 domain-containing protein YusD">
    <location>
        <begin position="1"/>
        <end position="114"/>
    </location>
</feature>
<feature type="domain" description="SCP2" evidence="1">
    <location>
        <begin position="21"/>
        <end position="101"/>
    </location>
</feature>
<name>YUSD_BACSU</name>
<organism>
    <name type="scientific">Bacillus subtilis (strain 168)</name>
    <dbReference type="NCBI Taxonomy" id="224308"/>
    <lineage>
        <taxon>Bacteria</taxon>
        <taxon>Bacillati</taxon>
        <taxon>Bacillota</taxon>
        <taxon>Bacilli</taxon>
        <taxon>Bacillales</taxon>
        <taxon>Bacillaceae</taxon>
        <taxon>Bacillus</taxon>
    </lineage>
</organism>
<evidence type="ECO:0000255" key="1"/>